<protein>
    <recommendedName>
        <fullName evidence="1">Type II methyltransferase M.MjaIV</fullName>
        <shortName evidence="1">M.MjaIV</shortName>
        <ecNumber>2.1.1.72</ecNumber>
    </recommendedName>
</protein>
<name>MTM4_METJA</name>
<proteinExistence type="predicted"/>
<accession>Q58724</accession>
<reference key="1">
    <citation type="journal article" date="1996" name="Science">
        <title>Complete genome sequence of the methanogenic archaeon, Methanococcus jannaschii.</title>
        <authorList>
            <person name="Bult C.J."/>
            <person name="White O."/>
            <person name="Olsen G.J."/>
            <person name="Zhou L."/>
            <person name="Fleischmann R.D."/>
            <person name="Sutton G.G."/>
            <person name="Blake J.A."/>
            <person name="FitzGerald L.M."/>
            <person name="Clayton R.A."/>
            <person name="Gocayne J.D."/>
            <person name="Kerlavage A.R."/>
            <person name="Dougherty B.A."/>
            <person name="Tomb J.-F."/>
            <person name="Adams M.D."/>
            <person name="Reich C.I."/>
            <person name="Overbeek R."/>
            <person name="Kirkness E.F."/>
            <person name="Weinstock K.G."/>
            <person name="Merrick J.M."/>
            <person name="Glodek A."/>
            <person name="Scott J.L."/>
            <person name="Geoghagen N.S.M."/>
            <person name="Weidman J.F."/>
            <person name="Fuhrmann J.L."/>
            <person name="Nguyen D."/>
            <person name="Utterback T.R."/>
            <person name="Kelley J.M."/>
            <person name="Peterson J.D."/>
            <person name="Sadow P.W."/>
            <person name="Hanna M.C."/>
            <person name="Cotton M.D."/>
            <person name="Roberts K.M."/>
            <person name="Hurst M.A."/>
            <person name="Kaine B.P."/>
            <person name="Borodovsky M."/>
            <person name="Klenk H.-P."/>
            <person name="Fraser C.M."/>
            <person name="Smith H.O."/>
            <person name="Woese C.R."/>
            <person name="Venter J.C."/>
        </authorList>
    </citation>
    <scope>NUCLEOTIDE SEQUENCE [LARGE SCALE GENOMIC DNA]</scope>
    <source>
        <strain>ATCC 43067 / DSM 2661 / JAL-1 / JCM 10045 / NBRC 100440</strain>
    </source>
</reference>
<reference key="2">
    <citation type="journal article" date="2003" name="Nucleic Acids Res.">
        <title>A nomenclature for restriction enzymes, DNA methyltransferases, homing endonucleases and their genes.</title>
        <authorList>
            <person name="Roberts R.J."/>
            <person name="Belfort M."/>
            <person name="Bestor T."/>
            <person name="Bhagwat A.S."/>
            <person name="Bickle T.A."/>
            <person name="Bitinaite J."/>
            <person name="Blumenthal R.M."/>
            <person name="Degtyarev S.K."/>
            <person name="Dryden D.T."/>
            <person name="Dybvig K."/>
            <person name="Firman K."/>
            <person name="Gromova E.S."/>
            <person name="Gumport R.I."/>
            <person name="Halford S.E."/>
            <person name="Hattman S."/>
            <person name="Heitman J."/>
            <person name="Hornby D.P."/>
            <person name="Janulaitis A."/>
            <person name="Jeltsch A."/>
            <person name="Josephsen J."/>
            <person name="Kiss A."/>
            <person name="Klaenhammer T.R."/>
            <person name="Kobayashi I."/>
            <person name="Kong H."/>
            <person name="Krueger D.H."/>
            <person name="Lacks S."/>
            <person name="Marinus M.G."/>
            <person name="Miyahara M."/>
            <person name="Morgan R.D."/>
            <person name="Murray N.E."/>
            <person name="Nagaraja V."/>
            <person name="Piekarowicz A."/>
            <person name="Pingoud A."/>
            <person name="Raleigh E."/>
            <person name="Rao D.N."/>
            <person name="Reich N."/>
            <person name="Repin V.E."/>
            <person name="Selker E.U."/>
            <person name="Shaw P.C."/>
            <person name="Stein D.C."/>
            <person name="Stoddard B.L."/>
            <person name="Szybalski W."/>
            <person name="Trautner T.A."/>
            <person name="Van Etten J.L."/>
            <person name="Vitor J.M."/>
            <person name="Wilson G.G."/>
            <person name="Xu S.Y."/>
        </authorList>
    </citation>
    <scope>NOMENCLATURE</scope>
</reference>
<gene>
    <name type="primary">mjaIVMP</name>
    <name type="ordered locus">MJ1328</name>
</gene>
<comment type="function">
    <text evidence="1">A methylase that recognizes the double-stranded sequence 5'-GTNNAC-3', methylates A-5 on both strands, and protects the DNA from cleavage by the MjaIV endonuclease.</text>
</comment>
<comment type="catalytic activity">
    <reaction>
        <text>a 2'-deoxyadenosine in DNA + S-adenosyl-L-methionine = an N(6)-methyl-2'-deoxyadenosine in DNA + S-adenosyl-L-homocysteine + H(+)</text>
        <dbReference type="Rhea" id="RHEA:15197"/>
        <dbReference type="Rhea" id="RHEA-COMP:12418"/>
        <dbReference type="Rhea" id="RHEA-COMP:12419"/>
        <dbReference type="ChEBI" id="CHEBI:15378"/>
        <dbReference type="ChEBI" id="CHEBI:57856"/>
        <dbReference type="ChEBI" id="CHEBI:59789"/>
        <dbReference type="ChEBI" id="CHEBI:90615"/>
        <dbReference type="ChEBI" id="CHEBI:90616"/>
        <dbReference type="EC" id="2.1.1.72"/>
    </reaction>
</comment>
<organism>
    <name type="scientific">Methanocaldococcus jannaschii (strain ATCC 43067 / DSM 2661 / JAL-1 / JCM 10045 / NBRC 100440)</name>
    <name type="common">Methanococcus jannaschii</name>
    <dbReference type="NCBI Taxonomy" id="243232"/>
    <lineage>
        <taxon>Archaea</taxon>
        <taxon>Methanobacteriati</taxon>
        <taxon>Methanobacteriota</taxon>
        <taxon>Methanomada group</taxon>
        <taxon>Methanococci</taxon>
        <taxon>Methanococcales</taxon>
        <taxon>Methanocaldococcaceae</taxon>
        <taxon>Methanocaldococcus</taxon>
    </lineage>
</organism>
<feature type="chain" id="PRO_0000088020" description="Type II methyltransferase M.MjaIV">
    <location>
        <begin position="1"/>
        <end position="298"/>
    </location>
</feature>
<dbReference type="EC" id="2.1.1.72"/>
<dbReference type="EMBL" id="L77117">
    <property type="protein sequence ID" value="AAB99337.1"/>
    <property type="molecule type" value="Genomic_DNA"/>
</dbReference>
<dbReference type="PIR" id="G64465">
    <property type="entry name" value="G64465"/>
</dbReference>
<dbReference type="SMR" id="Q58724"/>
<dbReference type="STRING" id="243232.MJ_1328"/>
<dbReference type="REBASE" id="3895">
    <property type="entry name" value="M.MjaIV"/>
</dbReference>
<dbReference type="PaxDb" id="243232-MJ_1328"/>
<dbReference type="EnsemblBacteria" id="AAB99337">
    <property type="protein sequence ID" value="AAB99337"/>
    <property type="gene ID" value="MJ_1328"/>
</dbReference>
<dbReference type="KEGG" id="mja:MJ_1328"/>
<dbReference type="eggNOG" id="arCOG03521">
    <property type="taxonomic scope" value="Archaea"/>
</dbReference>
<dbReference type="HOGENOM" id="CLU_932594_0_0_2"/>
<dbReference type="InParanoid" id="Q58724"/>
<dbReference type="PhylomeDB" id="Q58724"/>
<dbReference type="PRO" id="PR:Q58724"/>
<dbReference type="Proteomes" id="UP000000805">
    <property type="component" value="Chromosome"/>
</dbReference>
<dbReference type="GO" id="GO:0003677">
    <property type="term" value="F:DNA binding"/>
    <property type="evidence" value="ECO:0007669"/>
    <property type="project" value="UniProtKB-KW"/>
</dbReference>
<dbReference type="GO" id="GO:0009007">
    <property type="term" value="F:site-specific DNA-methyltransferase (adenine-specific) activity"/>
    <property type="evidence" value="ECO:0007669"/>
    <property type="project" value="RHEA"/>
</dbReference>
<dbReference type="GO" id="GO:0009307">
    <property type="term" value="P:DNA restriction-modification system"/>
    <property type="evidence" value="ECO:0007669"/>
    <property type="project" value="UniProtKB-KW"/>
</dbReference>
<dbReference type="GO" id="GO:0032259">
    <property type="term" value="P:methylation"/>
    <property type="evidence" value="ECO:0007669"/>
    <property type="project" value="UniProtKB-KW"/>
</dbReference>
<dbReference type="Gene3D" id="3.90.220.20">
    <property type="entry name" value="DNA methylase specificity domains"/>
    <property type="match status" value="1"/>
</dbReference>
<dbReference type="InterPro" id="IPR050953">
    <property type="entry name" value="N4_N6_ade-DNA_methylase"/>
</dbReference>
<dbReference type="InterPro" id="IPR044946">
    <property type="entry name" value="Restrct_endonuc_typeI_TRD_sf"/>
</dbReference>
<dbReference type="PANTHER" id="PTHR33841">
    <property type="entry name" value="DNA METHYLTRANSFERASE YEEA-RELATED"/>
    <property type="match status" value="1"/>
</dbReference>
<dbReference type="PANTHER" id="PTHR33841:SF6">
    <property type="entry name" value="TYPE II METHYLTRANSFERASE M.HINDII"/>
    <property type="match status" value="1"/>
</dbReference>
<dbReference type="SUPFAM" id="SSF116734">
    <property type="entry name" value="DNA methylase specificity domain"/>
    <property type="match status" value="1"/>
</dbReference>
<keyword id="KW-0238">DNA-binding</keyword>
<keyword id="KW-0489">Methyltransferase</keyword>
<keyword id="KW-1185">Reference proteome</keyword>
<keyword id="KW-0680">Restriction system</keyword>
<keyword id="KW-0808">Transferase</keyword>
<sequence length="298" mass="35328">MQKNQTIFLNTWKFLITLHQKPWSTFFTKIPDFPHVLLKDIAKVGVGLVSGFDEAFLLNEDDISKLNEDEKQLIKNFVKAKNCKRFVVEGFVQYILIEDNLKDEEIFKTKYPNIYKKLLKFKDRMENRYLPKNKKWFNWQALRNYKFLIKNLNKKRIYVPTLDRKPYNRFSLGDDELLPSGDVIFIQPYNDDDIYFLLGYLNSSFFRNYYLANGGRRGGRVAFTQKLLENAKIPTFSDEVKEKIKNIVKDIIYNLKNGKDIENLERQIDYIIVSAINNNQFKGYQTTLKNLLKPKLKG</sequence>
<evidence type="ECO:0000303" key="1">
    <source>
    </source>
</evidence>